<feature type="chain" id="PRO_0000299579" description="Ras and EF-hand domain-containing protein">
    <location>
        <begin position="1"/>
        <end position="663"/>
    </location>
</feature>
<feature type="domain" description="EF-hand 1" evidence="3">
    <location>
        <begin position="1"/>
        <end position="33"/>
    </location>
</feature>
<feature type="domain" description="EF-hand 2" evidence="3">
    <location>
        <begin position="35"/>
        <end position="70"/>
    </location>
</feature>
<feature type="region of interest" description="Disordered" evidence="4">
    <location>
        <begin position="324"/>
        <end position="343"/>
    </location>
</feature>
<feature type="coiled-coil region" evidence="2">
    <location>
        <begin position="122"/>
        <end position="297"/>
    </location>
</feature>
<feature type="compositionally biased region" description="Polar residues" evidence="4">
    <location>
        <begin position="324"/>
        <end position="336"/>
    </location>
</feature>
<feature type="binding site" evidence="3">
    <location>
        <position position="14"/>
    </location>
    <ligand>
        <name>Ca(2+)</name>
        <dbReference type="ChEBI" id="CHEBI:29108"/>
        <label>1</label>
    </ligand>
</feature>
<feature type="binding site" evidence="3">
    <location>
        <position position="16"/>
    </location>
    <ligand>
        <name>Ca(2+)</name>
        <dbReference type="ChEBI" id="CHEBI:29108"/>
        <label>1</label>
    </ligand>
</feature>
<feature type="binding site" evidence="3">
    <location>
        <position position="18"/>
    </location>
    <ligand>
        <name>Ca(2+)</name>
        <dbReference type="ChEBI" id="CHEBI:29108"/>
        <label>1</label>
    </ligand>
</feature>
<feature type="binding site" evidence="3">
    <location>
        <position position="20"/>
    </location>
    <ligand>
        <name>Ca(2+)</name>
        <dbReference type="ChEBI" id="CHEBI:29108"/>
        <label>1</label>
    </ligand>
</feature>
<feature type="binding site" evidence="3">
    <location>
        <position position="25"/>
    </location>
    <ligand>
        <name>Ca(2+)</name>
        <dbReference type="ChEBI" id="CHEBI:29108"/>
        <label>1</label>
    </ligand>
</feature>
<feature type="binding site" evidence="3">
    <location>
        <position position="48"/>
    </location>
    <ligand>
        <name>Ca(2+)</name>
        <dbReference type="ChEBI" id="CHEBI:29108"/>
        <label>2</label>
    </ligand>
</feature>
<feature type="binding site" evidence="3">
    <location>
        <position position="50"/>
    </location>
    <ligand>
        <name>Ca(2+)</name>
        <dbReference type="ChEBI" id="CHEBI:29108"/>
        <label>2</label>
    </ligand>
</feature>
<feature type="binding site" evidence="3">
    <location>
        <position position="52"/>
    </location>
    <ligand>
        <name>Ca(2+)</name>
        <dbReference type="ChEBI" id="CHEBI:29108"/>
        <label>2</label>
    </ligand>
</feature>
<feature type="binding site" evidence="3">
    <location>
        <position position="54"/>
    </location>
    <ligand>
        <name>Ca(2+)</name>
        <dbReference type="ChEBI" id="CHEBI:29108"/>
        <label>2</label>
    </ligand>
</feature>
<feature type="binding site" evidence="3">
    <location>
        <position position="59"/>
    </location>
    <ligand>
        <name>Ca(2+)</name>
        <dbReference type="ChEBI" id="CHEBI:29108"/>
        <label>2</label>
    </ligand>
</feature>
<feature type="binding site" evidence="1">
    <location>
        <begin position="477"/>
        <end position="482"/>
    </location>
    <ligand>
        <name>GTP</name>
        <dbReference type="ChEBI" id="CHEBI:37565"/>
    </ligand>
</feature>
<feature type="binding site" evidence="1">
    <location>
        <begin position="580"/>
        <end position="583"/>
    </location>
    <ligand>
        <name>GTP</name>
        <dbReference type="ChEBI" id="CHEBI:37565"/>
    </ligand>
</feature>
<feature type="binding site" evidence="1">
    <location>
        <begin position="615"/>
        <end position="616"/>
    </location>
    <ligand>
        <name>GTP</name>
        <dbReference type="ChEBI" id="CHEBI:37565"/>
    </ligand>
</feature>
<feature type="sequence conflict" description="In Ref. 2; AAI39658." evidence="5" ref="2">
    <original>S</original>
    <variation>A</variation>
    <location>
        <position position="68"/>
    </location>
</feature>
<feature type="sequence conflict" description="In Ref. 2; AAI39658." evidence="5" ref="2">
    <original>M</original>
    <variation>I</variation>
    <location>
        <position position="167"/>
    </location>
</feature>
<feature type="sequence conflict" description="In Ref. 2; AAI39658." evidence="5" ref="2">
    <original>E</original>
    <variation>Q</variation>
    <location>
        <position position="213"/>
    </location>
</feature>
<feature type="sequence conflict" description="In Ref. 2; AAI39658." evidence="5" ref="2">
    <original>S</original>
    <variation>P</variation>
    <location>
        <position position="329"/>
    </location>
</feature>
<feature type="sequence conflict" description="In Ref. 2; AAI39658." evidence="5" ref="2">
    <original>K</original>
    <variation>E</variation>
    <location>
        <position position="423"/>
    </location>
</feature>
<feature type="sequence conflict" description="In Ref. 2; AAI39658." evidence="5" ref="2">
    <original>N</original>
    <variation>S</variation>
    <location>
        <position position="620"/>
    </location>
</feature>
<sequence length="663" mass="75858">MNHAELRRLFAACDGNQSGRVEYEDFTTVCRELNVPADDIRTLFNKFDLDGDGYINFNDFSSSFQEVSEALNLASLGNCLHSQRRAWDEFENTLDGDVAFYLGRQWDALSELYEGIHSTSDELLLQQFEDLIRALVTEIREHRMESEQLETSLRRTEEVSSSQLAEMEEDLQQQLIHTERRVREEEQKKLDESIAMLQIKHENELADLQTTIERLTKQYQEESKLNTPREDSVKLRAQIKDLMEENEELRASLMKAQMNVSILQVELDKLKNAFTDQKRQHERESDDLKKMVMEFQSYSSHIEMLQEMNKSLYDSNDGLRSALSQENASTKRQLSPRNEVLPRKMKPIRQSTMNQSSFTNEEDTLALVKCWAEKYLDSGVSVQSEMDAMSGIDYDSDDSHHSVETVHHSYSCVPSELEVSEVKPEALRSVARSTVGSISSSLRRRLSAFPVKQNEEDLLDTQDLAPVYRLVLAGDAGSGKSSFLLRLSLNEFRGDIQTTLGVDFQIKKMLVDGEKTNLQIWDTAGQERFRSIARSYFRKAHGVLLLYDVTSESSFLNVREWVEQIRESTDEDIPMCIIGNKVDLRAARPEGSCVSSIHGEKLAMNYNALFCEASAKEGTNVIEAVLHLAREVKKHVKLGRRSESQVKLSLHKRRKTLSNCCGV</sequence>
<name>RASEF_DANRE</name>
<comment type="function">
    <text evidence="1">Binds predominantly GDP, and also GTP.</text>
</comment>
<comment type="subunit">
    <text evidence="1">Homodimer.</text>
</comment>
<comment type="subcellular location">
    <subcellularLocation>
        <location evidence="1">Cytoplasm</location>
        <location evidence="1">Perinuclear region</location>
    </subcellularLocation>
</comment>
<comment type="similarity">
    <text evidence="5">Belongs to the small GTPase superfamily. Rab family.</text>
</comment>
<accession>A5WW21</accession>
<accession>A4QP53</accession>
<proteinExistence type="evidence at transcript level"/>
<evidence type="ECO:0000250" key="1">
    <source>
        <dbReference type="UniProtKB" id="Q8IZ41"/>
    </source>
</evidence>
<evidence type="ECO:0000255" key="2"/>
<evidence type="ECO:0000255" key="3">
    <source>
        <dbReference type="PROSITE-ProRule" id="PRU00448"/>
    </source>
</evidence>
<evidence type="ECO:0000256" key="4">
    <source>
        <dbReference type="SAM" id="MobiDB-lite"/>
    </source>
</evidence>
<evidence type="ECO:0000305" key="5"/>
<reference key="1">
    <citation type="journal article" date="2013" name="Nature">
        <title>The zebrafish reference genome sequence and its relationship to the human genome.</title>
        <authorList>
            <person name="Howe K."/>
            <person name="Clark M.D."/>
            <person name="Torroja C.F."/>
            <person name="Torrance J."/>
            <person name="Berthelot C."/>
            <person name="Muffato M."/>
            <person name="Collins J.E."/>
            <person name="Humphray S."/>
            <person name="McLaren K."/>
            <person name="Matthews L."/>
            <person name="McLaren S."/>
            <person name="Sealy I."/>
            <person name="Caccamo M."/>
            <person name="Churcher C."/>
            <person name="Scott C."/>
            <person name="Barrett J.C."/>
            <person name="Koch R."/>
            <person name="Rauch G.J."/>
            <person name="White S."/>
            <person name="Chow W."/>
            <person name="Kilian B."/>
            <person name="Quintais L.T."/>
            <person name="Guerra-Assuncao J.A."/>
            <person name="Zhou Y."/>
            <person name="Gu Y."/>
            <person name="Yen J."/>
            <person name="Vogel J.H."/>
            <person name="Eyre T."/>
            <person name="Redmond S."/>
            <person name="Banerjee R."/>
            <person name="Chi J."/>
            <person name="Fu B."/>
            <person name="Langley E."/>
            <person name="Maguire S.F."/>
            <person name="Laird G.K."/>
            <person name="Lloyd D."/>
            <person name="Kenyon E."/>
            <person name="Donaldson S."/>
            <person name="Sehra H."/>
            <person name="Almeida-King J."/>
            <person name="Loveland J."/>
            <person name="Trevanion S."/>
            <person name="Jones M."/>
            <person name="Quail M."/>
            <person name="Willey D."/>
            <person name="Hunt A."/>
            <person name="Burton J."/>
            <person name="Sims S."/>
            <person name="McLay K."/>
            <person name="Plumb B."/>
            <person name="Davis J."/>
            <person name="Clee C."/>
            <person name="Oliver K."/>
            <person name="Clark R."/>
            <person name="Riddle C."/>
            <person name="Elliot D."/>
            <person name="Threadgold G."/>
            <person name="Harden G."/>
            <person name="Ware D."/>
            <person name="Begum S."/>
            <person name="Mortimore B."/>
            <person name="Kerry G."/>
            <person name="Heath P."/>
            <person name="Phillimore B."/>
            <person name="Tracey A."/>
            <person name="Corby N."/>
            <person name="Dunn M."/>
            <person name="Johnson C."/>
            <person name="Wood J."/>
            <person name="Clark S."/>
            <person name="Pelan S."/>
            <person name="Griffiths G."/>
            <person name="Smith M."/>
            <person name="Glithero R."/>
            <person name="Howden P."/>
            <person name="Barker N."/>
            <person name="Lloyd C."/>
            <person name="Stevens C."/>
            <person name="Harley J."/>
            <person name="Holt K."/>
            <person name="Panagiotidis G."/>
            <person name="Lovell J."/>
            <person name="Beasley H."/>
            <person name="Henderson C."/>
            <person name="Gordon D."/>
            <person name="Auger K."/>
            <person name="Wright D."/>
            <person name="Collins J."/>
            <person name="Raisen C."/>
            <person name="Dyer L."/>
            <person name="Leung K."/>
            <person name="Robertson L."/>
            <person name="Ambridge K."/>
            <person name="Leongamornlert D."/>
            <person name="McGuire S."/>
            <person name="Gilderthorp R."/>
            <person name="Griffiths C."/>
            <person name="Manthravadi D."/>
            <person name="Nichol S."/>
            <person name="Barker G."/>
            <person name="Whitehead S."/>
            <person name="Kay M."/>
            <person name="Brown J."/>
            <person name="Murnane C."/>
            <person name="Gray E."/>
            <person name="Humphries M."/>
            <person name="Sycamore N."/>
            <person name="Barker D."/>
            <person name="Saunders D."/>
            <person name="Wallis J."/>
            <person name="Babbage A."/>
            <person name="Hammond S."/>
            <person name="Mashreghi-Mohammadi M."/>
            <person name="Barr L."/>
            <person name="Martin S."/>
            <person name="Wray P."/>
            <person name="Ellington A."/>
            <person name="Matthews N."/>
            <person name="Ellwood M."/>
            <person name="Woodmansey R."/>
            <person name="Clark G."/>
            <person name="Cooper J."/>
            <person name="Tromans A."/>
            <person name="Grafham D."/>
            <person name="Skuce C."/>
            <person name="Pandian R."/>
            <person name="Andrews R."/>
            <person name="Harrison E."/>
            <person name="Kimberley A."/>
            <person name="Garnett J."/>
            <person name="Fosker N."/>
            <person name="Hall R."/>
            <person name="Garner P."/>
            <person name="Kelly D."/>
            <person name="Bird C."/>
            <person name="Palmer S."/>
            <person name="Gehring I."/>
            <person name="Berger A."/>
            <person name="Dooley C.M."/>
            <person name="Ersan-Urun Z."/>
            <person name="Eser C."/>
            <person name="Geiger H."/>
            <person name="Geisler M."/>
            <person name="Karotki L."/>
            <person name="Kirn A."/>
            <person name="Konantz J."/>
            <person name="Konantz M."/>
            <person name="Oberlander M."/>
            <person name="Rudolph-Geiger S."/>
            <person name="Teucke M."/>
            <person name="Lanz C."/>
            <person name="Raddatz G."/>
            <person name="Osoegawa K."/>
            <person name="Zhu B."/>
            <person name="Rapp A."/>
            <person name="Widaa S."/>
            <person name="Langford C."/>
            <person name="Yang F."/>
            <person name="Schuster S.C."/>
            <person name="Carter N.P."/>
            <person name="Harrow J."/>
            <person name="Ning Z."/>
            <person name="Herrero J."/>
            <person name="Searle S.M."/>
            <person name="Enright A."/>
            <person name="Geisler R."/>
            <person name="Plasterk R.H."/>
            <person name="Lee C."/>
            <person name="Westerfield M."/>
            <person name="de Jong P.J."/>
            <person name="Zon L.I."/>
            <person name="Postlethwait J.H."/>
            <person name="Nusslein-Volhard C."/>
            <person name="Hubbard T.J."/>
            <person name="Roest Crollius H."/>
            <person name="Rogers J."/>
            <person name="Stemple D.L."/>
        </authorList>
    </citation>
    <scope>NUCLEOTIDE SEQUENCE [LARGE SCALE GENOMIC DNA]</scope>
    <source>
        <strain>Tuebingen</strain>
    </source>
</reference>
<reference key="2">
    <citation type="submission" date="2007-04" db="EMBL/GenBank/DDBJ databases">
        <authorList>
            <consortium name="NIH - Zebrafish Gene Collection (ZGC) project"/>
        </authorList>
    </citation>
    <scope>NUCLEOTIDE SEQUENCE [LARGE SCALE MRNA]</scope>
    <source>
        <strain>SJD</strain>
    </source>
</reference>
<keyword id="KW-0106">Calcium</keyword>
<keyword id="KW-0175">Coiled coil</keyword>
<keyword id="KW-0963">Cytoplasm</keyword>
<keyword id="KW-0342">GTP-binding</keyword>
<keyword id="KW-0479">Metal-binding</keyword>
<keyword id="KW-0547">Nucleotide-binding</keyword>
<keyword id="KW-1185">Reference proteome</keyword>
<keyword id="KW-0677">Repeat</keyword>
<gene>
    <name type="primary">rasef</name>
    <name type="ORF">si:ch211-39k3.1</name>
    <name type="ORF">zgc:162879</name>
</gene>
<dbReference type="EMBL" id="CT573123">
    <property type="protein sequence ID" value="CAN88515.1"/>
    <property type="molecule type" value="Genomic_DNA"/>
</dbReference>
<dbReference type="EMBL" id="BC139657">
    <property type="protein sequence ID" value="AAI39658.1"/>
    <property type="molecule type" value="mRNA"/>
</dbReference>
<dbReference type="RefSeq" id="NP_001082896.1">
    <property type="nucleotide sequence ID" value="NM_001089427.1"/>
</dbReference>
<dbReference type="SMR" id="A5WW21"/>
<dbReference type="FunCoup" id="A5WW21">
    <property type="interactions" value="1333"/>
</dbReference>
<dbReference type="STRING" id="7955.ENSDARP00000093820"/>
<dbReference type="PaxDb" id="7955-ENSDARP00000093820"/>
<dbReference type="PeptideAtlas" id="A5WW21"/>
<dbReference type="Ensembl" id="ENSDART00000103046">
    <property type="protein sequence ID" value="ENSDARP00000093820"/>
    <property type="gene ID" value="ENSDARG00000074163"/>
</dbReference>
<dbReference type="GeneID" id="572256"/>
<dbReference type="KEGG" id="dre:572256"/>
<dbReference type="AGR" id="ZFIN:ZDB-GENE-070424-92"/>
<dbReference type="CTD" id="572256"/>
<dbReference type="ZFIN" id="ZDB-GENE-070424-92">
    <property type="gene designation" value="rasef2"/>
</dbReference>
<dbReference type="eggNOG" id="KOG0078">
    <property type="taxonomic scope" value="Eukaryota"/>
</dbReference>
<dbReference type="HOGENOM" id="CLU_023178_1_0_1"/>
<dbReference type="InParanoid" id="A5WW21"/>
<dbReference type="OMA" id="RMVVEYQ"/>
<dbReference type="OrthoDB" id="9879408at2759"/>
<dbReference type="PhylomeDB" id="A5WW21"/>
<dbReference type="TreeFam" id="TF313106"/>
<dbReference type="PRO" id="PR:A5WW21"/>
<dbReference type="Proteomes" id="UP000000437">
    <property type="component" value="Chromosome 18"/>
</dbReference>
<dbReference type="Bgee" id="ENSDARG00000074163">
    <property type="expression patterns" value="Expressed in early embryo and 20 other cell types or tissues"/>
</dbReference>
<dbReference type="GO" id="GO:0048471">
    <property type="term" value="C:perinuclear region of cytoplasm"/>
    <property type="evidence" value="ECO:0007669"/>
    <property type="project" value="UniProtKB-SubCell"/>
</dbReference>
<dbReference type="GO" id="GO:0005509">
    <property type="term" value="F:calcium ion binding"/>
    <property type="evidence" value="ECO:0007669"/>
    <property type="project" value="InterPro"/>
</dbReference>
<dbReference type="GO" id="GO:0005525">
    <property type="term" value="F:GTP binding"/>
    <property type="evidence" value="ECO:0000318"/>
    <property type="project" value="GO_Central"/>
</dbReference>
<dbReference type="GO" id="GO:0003924">
    <property type="term" value="F:GTPase activity"/>
    <property type="evidence" value="ECO:0000318"/>
    <property type="project" value="GO_Central"/>
</dbReference>
<dbReference type="GO" id="GO:0016192">
    <property type="term" value="P:vesicle-mediated transport"/>
    <property type="evidence" value="ECO:0000318"/>
    <property type="project" value="GO_Central"/>
</dbReference>
<dbReference type="CDD" id="cd00051">
    <property type="entry name" value="EFh"/>
    <property type="match status" value="1"/>
</dbReference>
<dbReference type="CDD" id="cd00154">
    <property type="entry name" value="Rab"/>
    <property type="match status" value="1"/>
</dbReference>
<dbReference type="FunFam" id="3.40.50.300:FF:001348">
    <property type="entry name" value="Ras and EF-hand domain-containing protein"/>
    <property type="match status" value="1"/>
</dbReference>
<dbReference type="Gene3D" id="1.10.238.10">
    <property type="entry name" value="EF-hand"/>
    <property type="match status" value="1"/>
</dbReference>
<dbReference type="Gene3D" id="3.40.50.300">
    <property type="entry name" value="P-loop containing nucleotide triphosphate hydrolases"/>
    <property type="match status" value="1"/>
</dbReference>
<dbReference type="InterPro" id="IPR011992">
    <property type="entry name" value="EF-hand-dom_pair"/>
</dbReference>
<dbReference type="InterPro" id="IPR018247">
    <property type="entry name" value="EF_Hand_1_Ca_BS"/>
</dbReference>
<dbReference type="InterPro" id="IPR002048">
    <property type="entry name" value="EF_hand_dom"/>
</dbReference>
<dbReference type="InterPro" id="IPR027417">
    <property type="entry name" value="P-loop_NTPase"/>
</dbReference>
<dbReference type="InterPro" id="IPR050227">
    <property type="entry name" value="Rab"/>
</dbReference>
<dbReference type="InterPro" id="IPR005225">
    <property type="entry name" value="Small_GTP-bd"/>
</dbReference>
<dbReference type="InterPro" id="IPR001806">
    <property type="entry name" value="Small_GTPase"/>
</dbReference>
<dbReference type="NCBIfam" id="TIGR00231">
    <property type="entry name" value="small_GTP"/>
    <property type="match status" value="1"/>
</dbReference>
<dbReference type="PANTHER" id="PTHR47977">
    <property type="entry name" value="RAS-RELATED PROTEIN RAB"/>
    <property type="match status" value="1"/>
</dbReference>
<dbReference type="Pfam" id="PF13499">
    <property type="entry name" value="EF-hand_7"/>
    <property type="match status" value="1"/>
</dbReference>
<dbReference type="Pfam" id="PF00071">
    <property type="entry name" value="Ras"/>
    <property type="match status" value="1"/>
</dbReference>
<dbReference type="PRINTS" id="PR00449">
    <property type="entry name" value="RASTRNSFRMNG"/>
</dbReference>
<dbReference type="SMART" id="SM00177">
    <property type="entry name" value="ARF"/>
    <property type="match status" value="1"/>
</dbReference>
<dbReference type="SMART" id="SM00054">
    <property type="entry name" value="EFh"/>
    <property type="match status" value="2"/>
</dbReference>
<dbReference type="SMART" id="SM00175">
    <property type="entry name" value="RAB"/>
    <property type="match status" value="1"/>
</dbReference>
<dbReference type="SMART" id="SM00176">
    <property type="entry name" value="RAN"/>
    <property type="match status" value="1"/>
</dbReference>
<dbReference type="SMART" id="SM00173">
    <property type="entry name" value="RAS"/>
    <property type="match status" value="1"/>
</dbReference>
<dbReference type="SMART" id="SM00174">
    <property type="entry name" value="RHO"/>
    <property type="match status" value="1"/>
</dbReference>
<dbReference type="SUPFAM" id="SSF47473">
    <property type="entry name" value="EF-hand"/>
    <property type="match status" value="1"/>
</dbReference>
<dbReference type="SUPFAM" id="SSF52540">
    <property type="entry name" value="P-loop containing nucleoside triphosphate hydrolases"/>
    <property type="match status" value="1"/>
</dbReference>
<dbReference type="PROSITE" id="PS00018">
    <property type="entry name" value="EF_HAND_1"/>
    <property type="match status" value="2"/>
</dbReference>
<dbReference type="PROSITE" id="PS50222">
    <property type="entry name" value="EF_HAND_2"/>
    <property type="match status" value="2"/>
</dbReference>
<dbReference type="PROSITE" id="PS51419">
    <property type="entry name" value="RAB"/>
    <property type="match status" value="1"/>
</dbReference>
<protein>
    <recommendedName>
        <fullName>Ras and EF-hand domain-containing protein</fullName>
    </recommendedName>
</protein>
<organism>
    <name type="scientific">Danio rerio</name>
    <name type="common">Zebrafish</name>
    <name type="synonym">Brachydanio rerio</name>
    <dbReference type="NCBI Taxonomy" id="7955"/>
    <lineage>
        <taxon>Eukaryota</taxon>
        <taxon>Metazoa</taxon>
        <taxon>Chordata</taxon>
        <taxon>Craniata</taxon>
        <taxon>Vertebrata</taxon>
        <taxon>Euteleostomi</taxon>
        <taxon>Actinopterygii</taxon>
        <taxon>Neopterygii</taxon>
        <taxon>Teleostei</taxon>
        <taxon>Ostariophysi</taxon>
        <taxon>Cypriniformes</taxon>
        <taxon>Danionidae</taxon>
        <taxon>Danioninae</taxon>
        <taxon>Danio</taxon>
    </lineage>
</organism>